<reference key="1">
    <citation type="journal article" date="2008" name="BMC Genomics">
        <title>Acidithiobacillus ferrooxidans metabolism: from genome sequence to industrial applications.</title>
        <authorList>
            <person name="Valdes J."/>
            <person name="Pedroso I."/>
            <person name="Quatrini R."/>
            <person name="Dodson R.J."/>
            <person name="Tettelin H."/>
            <person name="Blake R. II"/>
            <person name="Eisen J.A."/>
            <person name="Holmes D.S."/>
        </authorList>
    </citation>
    <scope>NUCLEOTIDE SEQUENCE [LARGE SCALE GENOMIC DNA]</scope>
    <source>
        <strain>ATCC 23270 / DSM 14882 / CIP 104768 / NCIMB 8455</strain>
    </source>
</reference>
<comment type="function">
    <text evidence="1">Catalyzes the hydrolysis of N-succinyl-L,L-diaminopimelic acid (SDAP), forming succinate and LL-2,6-diaminopimelate (DAP), an intermediate involved in the bacterial biosynthesis of lysine and meso-diaminopimelic acid, an essential component of bacterial cell walls.</text>
</comment>
<comment type="catalytic activity">
    <reaction evidence="1">
        <text>N-succinyl-(2S,6S)-2,6-diaminopimelate + H2O = (2S,6S)-2,6-diaminopimelate + succinate</text>
        <dbReference type="Rhea" id="RHEA:22608"/>
        <dbReference type="ChEBI" id="CHEBI:15377"/>
        <dbReference type="ChEBI" id="CHEBI:30031"/>
        <dbReference type="ChEBI" id="CHEBI:57609"/>
        <dbReference type="ChEBI" id="CHEBI:58087"/>
        <dbReference type="EC" id="3.5.1.18"/>
    </reaction>
</comment>
<comment type="cofactor">
    <cofactor evidence="1">
        <name>Zn(2+)</name>
        <dbReference type="ChEBI" id="CHEBI:29105"/>
    </cofactor>
    <cofactor evidence="1">
        <name>Co(2+)</name>
        <dbReference type="ChEBI" id="CHEBI:48828"/>
    </cofactor>
    <text evidence="1">Binds 2 Zn(2+) or Co(2+) ions per subunit.</text>
</comment>
<comment type="pathway">
    <text evidence="1">Amino-acid biosynthesis; L-lysine biosynthesis via DAP pathway; LL-2,6-diaminopimelate from (S)-tetrahydrodipicolinate (succinylase route): step 3/3.</text>
</comment>
<comment type="subunit">
    <text evidence="1">Homodimer.</text>
</comment>
<comment type="similarity">
    <text evidence="1">Belongs to the peptidase M20A family. DapE subfamily.</text>
</comment>
<keyword id="KW-0028">Amino-acid biosynthesis</keyword>
<keyword id="KW-0170">Cobalt</keyword>
<keyword id="KW-0220">Diaminopimelate biosynthesis</keyword>
<keyword id="KW-0378">Hydrolase</keyword>
<keyword id="KW-0457">Lysine biosynthesis</keyword>
<keyword id="KW-0479">Metal-binding</keyword>
<keyword id="KW-1185">Reference proteome</keyword>
<keyword id="KW-0862">Zinc</keyword>
<protein>
    <recommendedName>
        <fullName evidence="1">Succinyl-diaminopimelate desuccinylase</fullName>
        <shortName evidence="1">SDAP desuccinylase</shortName>
        <ecNumber evidence="1">3.5.1.18</ecNumber>
    </recommendedName>
    <alternativeName>
        <fullName evidence="1">N-succinyl-LL-2,6-diaminoheptanedioate amidohydrolase</fullName>
    </alternativeName>
</protein>
<sequence length="382" mass="41156">MGKSAVLELAEDLISRPSVTPEDAGCQELMIARLKAVGFRVTRLPANGVENFWAERGGAGPRLCFAGHTDVVPSGPLAEWQNDPFQPIIRDGMLYGRGAADMKGSLAAMVVAAERFVALHPAHSGRLAFLITSDEEGIATHGTRHVVDWLREHGETIDWCVVGEPSSEKVLGDVIKNGRRGSLNGRLTVHGIQGHVAYPDKADNPIHRAFRPLADLVDQSWDAGNDFFPPTRLQFSNIHAGTGANNVIPGQLQADFNFRFSTESTPESLQAGVHKILDASAMRYTIDWQLSGPPFFTAPGPLVAATQKALQAVEQRVAQLSTGGGTSDGRFIAQLGGQVVELGPVNATIHKINECVAVADLEHLAQIYMEIMVHLLETANGR</sequence>
<proteinExistence type="inferred from homology"/>
<evidence type="ECO:0000255" key="1">
    <source>
        <dbReference type="HAMAP-Rule" id="MF_01690"/>
    </source>
</evidence>
<dbReference type="EC" id="3.5.1.18" evidence="1"/>
<dbReference type="EMBL" id="CP001219">
    <property type="protein sequence ID" value="ACK79858.1"/>
    <property type="molecule type" value="Genomic_DNA"/>
</dbReference>
<dbReference type="RefSeq" id="WP_012536780.1">
    <property type="nucleotide sequence ID" value="NC_011761.1"/>
</dbReference>
<dbReference type="SMR" id="B7JBS5"/>
<dbReference type="STRING" id="243159.AFE_1819"/>
<dbReference type="PaxDb" id="243159-AFE_1819"/>
<dbReference type="GeneID" id="65280986"/>
<dbReference type="KEGG" id="afr:AFE_1819"/>
<dbReference type="eggNOG" id="COG0624">
    <property type="taxonomic scope" value="Bacteria"/>
</dbReference>
<dbReference type="HOGENOM" id="CLU_021802_4_0_6"/>
<dbReference type="UniPathway" id="UPA00034">
    <property type="reaction ID" value="UER00021"/>
</dbReference>
<dbReference type="Proteomes" id="UP000001362">
    <property type="component" value="Chromosome"/>
</dbReference>
<dbReference type="GO" id="GO:0008777">
    <property type="term" value="F:acetylornithine deacetylase activity"/>
    <property type="evidence" value="ECO:0007669"/>
    <property type="project" value="TreeGrafter"/>
</dbReference>
<dbReference type="GO" id="GO:0050897">
    <property type="term" value="F:cobalt ion binding"/>
    <property type="evidence" value="ECO:0007669"/>
    <property type="project" value="UniProtKB-UniRule"/>
</dbReference>
<dbReference type="GO" id="GO:0009014">
    <property type="term" value="F:succinyl-diaminopimelate desuccinylase activity"/>
    <property type="evidence" value="ECO:0007669"/>
    <property type="project" value="UniProtKB-UniRule"/>
</dbReference>
<dbReference type="GO" id="GO:0008270">
    <property type="term" value="F:zinc ion binding"/>
    <property type="evidence" value="ECO:0007669"/>
    <property type="project" value="UniProtKB-UniRule"/>
</dbReference>
<dbReference type="GO" id="GO:0019877">
    <property type="term" value="P:diaminopimelate biosynthetic process"/>
    <property type="evidence" value="ECO:0007669"/>
    <property type="project" value="UniProtKB-UniRule"/>
</dbReference>
<dbReference type="GO" id="GO:0006526">
    <property type="term" value="P:L-arginine biosynthetic process"/>
    <property type="evidence" value="ECO:0007669"/>
    <property type="project" value="TreeGrafter"/>
</dbReference>
<dbReference type="GO" id="GO:0009089">
    <property type="term" value="P:lysine biosynthetic process via diaminopimelate"/>
    <property type="evidence" value="ECO:0007669"/>
    <property type="project" value="UniProtKB-UniRule"/>
</dbReference>
<dbReference type="CDD" id="cd03891">
    <property type="entry name" value="M20_DapE_proteobac"/>
    <property type="match status" value="1"/>
</dbReference>
<dbReference type="FunFam" id="3.40.630.10:FF:000005">
    <property type="entry name" value="Succinyl-diaminopimelate desuccinylase"/>
    <property type="match status" value="1"/>
</dbReference>
<dbReference type="Gene3D" id="3.40.630.10">
    <property type="entry name" value="Zn peptidases"/>
    <property type="match status" value="2"/>
</dbReference>
<dbReference type="HAMAP" id="MF_01690">
    <property type="entry name" value="DapE"/>
    <property type="match status" value="1"/>
</dbReference>
<dbReference type="InterPro" id="IPR001261">
    <property type="entry name" value="ArgE/DapE_CS"/>
</dbReference>
<dbReference type="InterPro" id="IPR036264">
    <property type="entry name" value="Bact_exopeptidase_dim_dom"/>
</dbReference>
<dbReference type="InterPro" id="IPR005941">
    <property type="entry name" value="DapE_proteobac"/>
</dbReference>
<dbReference type="InterPro" id="IPR002933">
    <property type="entry name" value="Peptidase_M20"/>
</dbReference>
<dbReference type="InterPro" id="IPR011650">
    <property type="entry name" value="Peptidase_M20_dimer"/>
</dbReference>
<dbReference type="InterPro" id="IPR050072">
    <property type="entry name" value="Peptidase_M20A"/>
</dbReference>
<dbReference type="NCBIfam" id="TIGR01246">
    <property type="entry name" value="dapE_proteo"/>
    <property type="match status" value="1"/>
</dbReference>
<dbReference type="NCBIfam" id="NF009557">
    <property type="entry name" value="PRK13009.1"/>
    <property type="match status" value="1"/>
</dbReference>
<dbReference type="PANTHER" id="PTHR43808">
    <property type="entry name" value="ACETYLORNITHINE DEACETYLASE"/>
    <property type="match status" value="1"/>
</dbReference>
<dbReference type="PANTHER" id="PTHR43808:SF31">
    <property type="entry name" value="N-ACETYL-L-CITRULLINE DEACETYLASE"/>
    <property type="match status" value="1"/>
</dbReference>
<dbReference type="Pfam" id="PF07687">
    <property type="entry name" value="M20_dimer"/>
    <property type="match status" value="1"/>
</dbReference>
<dbReference type="Pfam" id="PF01546">
    <property type="entry name" value="Peptidase_M20"/>
    <property type="match status" value="1"/>
</dbReference>
<dbReference type="SUPFAM" id="SSF55031">
    <property type="entry name" value="Bacterial exopeptidase dimerisation domain"/>
    <property type="match status" value="1"/>
</dbReference>
<dbReference type="SUPFAM" id="SSF53187">
    <property type="entry name" value="Zn-dependent exopeptidases"/>
    <property type="match status" value="1"/>
</dbReference>
<dbReference type="PROSITE" id="PS00759">
    <property type="entry name" value="ARGE_DAPE_CPG2_2"/>
    <property type="match status" value="1"/>
</dbReference>
<organism>
    <name type="scientific">Acidithiobacillus ferrooxidans (strain ATCC 23270 / DSM 14882 / CIP 104768 / NCIMB 8455)</name>
    <name type="common">Ferrobacillus ferrooxidans (strain ATCC 23270)</name>
    <dbReference type="NCBI Taxonomy" id="243159"/>
    <lineage>
        <taxon>Bacteria</taxon>
        <taxon>Pseudomonadati</taxon>
        <taxon>Pseudomonadota</taxon>
        <taxon>Acidithiobacillia</taxon>
        <taxon>Acidithiobacillales</taxon>
        <taxon>Acidithiobacillaceae</taxon>
        <taxon>Acidithiobacillus</taxon>
    </lineage>
</organism>
<feature type="chain" id="PRO_0000375438" description="Succinyl-diaminopimelate desuccinylase">
    <location>
        <begin position="1"/>
        <end position="382"/>
    </location>
</feature>
<feature type="active site" evidence="1">
    <location>
        <position position="70"/>
    </location>
</feature>
<feature type="active site" description="Proton acceptor" evidence="1">
    <location>
        <position position="135"/>
    </location>
</feature>
<feature type="binding site" evidence="1">
    <location>
        <position position="68"/>
    </location>
    <ligand>
        <name>Zn(2+)</name>
        <dbReference type="ChEBI" id="CHEBI:29105"/>
        <label>1</label>
    </ligand>
</feature>
<feature type="binding site" evidence="1">
    <location>
        <position position="101"/>
    </location>
    <ligand>
        <name>Zn(2+)</name>
        <dbReference type="ChEBI" id="CHEBI:29105"/>
        <label>1</label>
    </ligand>
</feature>
<feature type="binding site" evidence="1">
    <location>
        <position position="101"/>
    </location>
    <ligand>
        <name>Zn(2+)</name>
        <dbReference type="ChEBI" id="CHEBI:29105"/>
        <label>2</label>
    </ligand>
</feature>
<feature type="binding site" evidence="1">
    <location>
        <position position="136"/>
    </location>
    <ligand>
        <name>Zn(2+)</name>
        <dbReference type="ChEBI" id="CHEBI:29105"/>
        <label>2</label>
    </ligand>
</feature>
<feature type="binding site" evidence="1">
    <location>
        <position position="164"/>
    </location>
    <ligand>
        <name>Zn(2+)</name>
        <dbReference type="ChEBI" id="CHEBI:29105"/>
        <label>1</label>
    </ligand>
</feature>
<feature type="binding site" evidence="1">
    <location>
        <position position="350"/>
    </location>
    <ligand>
        <name>Zn(2+)</name>
        <dbReference type="ChEBI" id="CHEBI:29105"/>
        <label>2</label>
    </ligand>
</feature>
<gene>
    <name evidence="1" type="primary">dapE</name>
    <name type="ordered locus">AFE_1819</name>
</gene>
<accession>B7JBS5</accession>
<name>DAPE_ACIF2</name>